<sequence>MSEFLRIAMAQFDFPVGAVAQNAERIIALIEQARDEHGADVVMFPELALSGYPPEDLLLRPGFLAHCQVAIERIAAATHGIVAVVGWPQSAGSVVYNVASVLCDGQVEQTYRKRELPNYAVFDERRYFEVDPNGSRCVFKVKGVPVGVLICEDLWFSEPLADTVCGGAELVLVPNASPYERGKHAQRDALLAERARETGAAIAYLNVVGGQDALVFDGASVVVDGHGRVHPAAAAFSDQWLVVDYMRSERRFVPLQWVVESEVSINALVWRAVVRGVQDYCRKNGFSKVWVGLSGGIDSALVLAIAVDALGADQVTAVRLPSRYTAELSNDLAAEQCHSLGVRLETVAIEPVFEGLLAALGPLFAGMAPDATEENLQSRSRGVILMALANKFGGLLLTTGNKSEYAVGYATIYGDMCGGYAPLKDIYKSQVFELAQWRNRVSDVLAIPPGVIHRPPSAELRAQQTDQDSLPPYEVLDGILSLYVDQEQSREDIIAAGYAAGVVDYVLNLVRINEWKRHQAAPGPKVSQRAFGRERRYPISNAYRG</sequence>
<protein>
    <recommendedName>
        <fullName evidence="1">Glutamine-dependent NAD(+) synthetase</fullName>
        <ecNumber evidence="1">6.3.5.1</ecNumber>
    </recommendedName>
    <alternativeName>
        <fullName evidence="1">NAD(+) synthase [glutamine-hydrolyzing]</fullName>
    </alternativeName>
</protein>
<gene>
    <name evidence="1" type="primary">nadE</name>
    <name type="ordered locus">PD_0839</name>
</gene>
<feature type="chain" id="PRO_0000306414" description="Glutamine-dependent NAD(+) synthetase">
    <location>
        <begin position="1"/>
        <end position="545"/>
    </location>
</feature>
<feature type="domain" description="CN hydrolase" evidence="2">
    <location>
        <begin position="5"/>
        <end position="247"/>
    </location>
</feature>
<feature type="region of interest" description="Ligase">
    <location>
        <begin position="269"/>
        <end position="545"/>
    </location>
</feature>
<feature type="active site" description="Proton acceptor; for glutaminase activity" evidence="1">
    <location>
        <position position="46"/>
    </location>
</feature>
<feature type="active site" description="For glutaminase activity" evidence="1">
    <location>
        <position position="113"/>
    </location>
</feature>
<feature type="active site" description="Nucleophile; for glutaminase activity" evidence="1">
    <location>
        <position position="151"/>
    </location>
</feature>
<feature type="binding site" evidence="1">
    <location>
        <position position="119"/>
    </location>
    <ligand>
        <name>L-glutamine</name>
        <dbReference type="ChEBI" id="CHEBI:58359"/>
    </ligand>
</feature>
<feature type="binding site" evidence="1">
    <location>
        <position position="177"/>
    </location>
    <ligand>
        <name>L-glutamine</name>
        <dbReference type="ChEBI" id="CHEBI:58359"/>
    </ligand>
</feature>
<feature type="binding site" evidence="1">
    <location>
        <position position="183"/>
    </location>
    <ligand>
        <name>L-glutamine</name>
        <dbReference type="ChEBI" id="CHEBI:58359"/>
    </ligand>
</feature>
<feature type="binding site" evidence="1">
    <location>
        <begin position="292"/>
        <end position="299"/>
    </location>
    <ligand>
        <name>ATP</name>
        <dbReference type="ChEBI" id="CHEBI:30616"/>
    </ligand>
</feature>
<feature type="binding site" evidence="1">
    <location>
        <position position="375"/>
    </location>
    <ligand>
        <name>deamido-NAD(+)</name>
        <dbReference type="ChEBI" id="CHEBI:58437"/>
    </ligand>
</feature>
<feature type="binding site" evidence="1">
    <location>
        <position position="399"/>
    </location>
    <ligand>
        <name>ATP</name>
        <dbReference type="ChEBI" id="CHEBI:30616"/>
    </ligand>
</feature>
<feature type="binding site" evidence="1">
    <location>
        <position position="404"/>
    </location>
    <ligand>
        <name>deamido-NAD(+)</name>
        <dbReference type="ChEBI" id="CHEBI:58437"/>
    </ligand>
</feature>
<feature type="binding site" evidence="1">
    <location>
        <position position="516"/>
    </location>
    <ligand>
        <name>deamido-NAD(+)</name>
        <dbReference type="ChEBI" id="CHEBI:58437"/>
    </ligand>
</feature>
<accession>Q87D47</accession>
<dbReference type="EC" id="6.3.5.1" evidence="1"/>
<dbReference type="EMBL" id="AE009442">
    <property type="protein sequence ID" value="AAO28707.1"/>
    <property type="molecule type" value="Genomic_DNA"/>
</dbReference>
<dbReference type="RefSeq" id="WP_004572843.1">
    <property type="nucleotide sequence ID" value="NC_004556.1"/>
</dbReference>
<dbReference type="SMR" id="Q87D47"/>
<dbReference type="KEGG" id="xft:PD_0839"/>
<dbReference type="HOGENOM" id="CLU_022313_2_0_6"/>
<dbReference type="UniPathway" id="UPA00253">
    <property type="reaction ID" value="UER00334"/>
</dbReference>
<dbReference type="Proteomes" id="UP000002516">
    <property type="component" value="Chromosome"/>
</dbReference>
<dbReference type="GO" id="GO:0005737">
    <property type="term" value="C:cytoplasm"/>
    <property type="evidence" value="ECO:0007669"/>
    <property type="project" value="InterPro"/>
</dbReference>
<dbReference type="GO" id="GO:0005524">
    <property type="term" value="F:ATP binding"/>
    <property type="evidence" value="ECO:0007669"/>
    <property type="project" value="UniProtKB-UniRule"/>
</dbReference>
<dbReference type="GO" id="GO:0004359">
    <property type="term" value="F:glutaminase activity"/>
    <property type="evidence" value="ECO:0007669"/>
    <property type="project" value="InterPro"/>
</dbReference>
<dbReference type="GO" id="GO:0003952">
    <property type="term" value="F:NAD+ synthase (glutamine-hydrolyzing) activity"/>
    <property type="evidence" value="ECO:0007669"/>
    <property type="project" value="UniProtKB-EC"/>
</dbReference>
<dbReference type="GO" id="GO:0008795">
    <property type="term" value="F:NAD+ synthase activity"/>
    <property type="evidence" value="ECO:0007669"/>
    <property type="project" value="UniProtKB-UniRule"/>
</dbReference>
<dbReference type="GO" id="GO:0000257">
    <property type="term" value="F:nitrilase activity"/>
    <property type="evidence" value="ECO:0007669"/>
    <property type="project" value="UniProtKB-ARBA"/>
</dbReference>
<dbReference type="GO" id="GO:0009435">
    <property type="term" value="P:NAD biosynthetic process"/>
    <property type="evidence" value="ECO:0007669"/>
    <property type="project" value="UniProtKB-UniRule"/>
</dbReference>
<dbReference type="CDD" id="cd07570">
    <property type="entry name" value="GAT_Gln-NAD-synth"/>
    <property type="match status" value="1"/>
</dbReference>
<dbReference type="CDD" id="cd00553">
    <property type="entry name" value="NAD_synthase"/>
    <property type="match status" value="1"/>
</dbReference>
<dbReference type="FunFam" id="3.40.50.620:FF:000106">
    <property type="entry name" value="Glutamine-dependent NAD(+) synthetase"/>
    <property type="match status" value="1"/>
</dbReference>
<dbReference type="Gene3D" id="3.60.110.10">
    <property type="entry name" value="Carbon-nitrogen hydrolase"/>
    <property type="match status" value="1"/>
</dbReference>
<dbReference type="Gene3D" id="3.40.50.620">
    <property type="entry name" value="HUPs"/>
    <property type="match status" value="1"/>
</dbReference>
<dbReference type="HAMAP" id="MF_02090">
    <property type="entry name" value="NadE_glutamine_dep"/>
    <property type="match status" value="1"/>
</dbReference>
<dbReference type="InterPro" id="IPR003010">
    <property type="entry name" value="C-N_Hydrolase"/>
</dbReference>
<dbReference type="InterPro" id="IPR036526">
    <property type="entry name" value="C-N_Hydrolase_sf"/>
</dbReference>
<dbReference type="InterPro" id="IPR014445">
    <property type="entry name" value="Gln-dep_NAD_synthase"/>
</dbReference>
<dbReference type="InterPro" id="IPR022310">
    <property type="entry name" value="NAD/GMP_synthase"/>
</dbReference>
<dbReference type="InterPro" id="IPR003694">
    <property type="entry name" value="NAD_synthase"/>
</dbReference>
<dbReference type="InterPro" id="IPR000132">
    <property type="entry name" value="Nitrilase/CN_hydratase_CS"/>
</dbReference>
<dbReference type="InterPro" id="IPR014729">
    <property type="entry name" value="Rossmann-like_a/b/a_fold"/>
</dbReference>
<dbReference type="NCBIfam" id="TIGR00552">
    <property type="entry name" value="nadE"/>
    <property type="match status" value="1"/>
</dbReference>
<dbReference type="NCBIfam" id="NF010588">
    <property type="entry name" value="PRK13981.1"/>
    <property type="match status" value="1"/>
</dbReference>
<dbReference type="PANTHER" id="PTHR23090:SF9">
    <property type="entry name" value="GLUTAMINE-DEPENDENT NAD(+) SYNTHETASE"/>
    <property type="match status" value="1"/>
</dbReference>
<dbReference type="PANTHER" id="PTHR23090">
    <property type="entry name" value="NH 3 /GLUTAMINE-DEPENDENT NAD + SYNTHETASE"/>
    <property type="match status" value="1"/>
</dbReference>
<dbReference type="Pfam" id="PF00795">
    <property type="entry name" value="CN_hydrolase"/>
    <property type="match status" value="1"/>
</dbReference>
<dbReference type="Pfam" id="PF02540">
    <property type="entry name" value="NAD_synthase"/>
    <property type="match status" value="1"/>
</dbReference>
<dbReference type="PIRSF" id="PIRSF006630">
    <property type="entry name" value="NADS_GAT"/>
    <property type="match status" value="1"/>
</dbReference>
<dbReference type="SUPFAM" id="SSF52402">
    <property type="entry name" value="Adenine nucleotide alpha hydrolases-like"/>
    <property type="match status" value="1"/>
</dbReference>
<dbReference type="SUPFAM" id="SSF56317">
    <property type="entry name" value="Carbon-nitrogen hydrolase"/>
    <property type="match status" value="1"/>
</dbReference>
<dbReference type="PROSITE" id="PS50263">
    <property type="entry name" value="CN_HYDROLASE"/>
    <property type="match status" value="1"/>
</dbReference>
<dbReference type="PROSITE" id="PS00920">
    <property type="entry name" value="NITRIL_CHT_1"/>
    <property type="match status" value="1"/>
</dbReference>
<keyword id="KW-0067">ATP-binding</keyword>
<keyword id="KW-0436">Ligase</keyword>
<keyword id="KW-0520">NAD</keyword>
<keyword id="KW-0547">Nucleotide-binding</keyword>
<keyword id="KW-1185">Reference proteome</keyword>
<name>NADE_XYLFT</name>
<comment type="function">
    <text evidence="1">Catalyzes the ATP-dependent amidation of deamido-NAD to form NAD. Uses L-glutamine as a nitrogen source.</text>
</comment>
<comment type="catalytic activity">
    <reaction evidence="1">
        <text>deamido-NAD(+) + L-glutamine + ATP + H2O = L-glutamate + AMP + diphosphate + NAD(+) + H(+)</text>
        <dbReference type="Rhea" id="RHEA:24384"/>
        <dbReference type="ChEBI" id="CHEBI:15377"/>
        <dbReference type="ChEBI" id="CHEBI:15378"/>
        <dbReference type="ChEBI" id="CHEBI:29985"/>
        <dbReference type="ChEBI" id="CHEBI:30616"/>
        <dbReference type="ChEBI" id="CHEBI:33019"/>
        <dbReference type="ChEBI" id="CHEBI:57540"/>
        <dbReference type="ChEBI" id="CHEBI:58359"/>
        <dbReference type="ChEBI" id="CHEBI:58437"/>
        <dbReference type="ChEBI" id="CHEBI:456215"/>
        <dbReference type="EC" id="6.3.5.1"/>
    </reaction>
</comment>
<comment type="pathway">
    <text evidence="1">Cofactor biosynthesis; NAD(+) biosynthesis; NAD(+) from deamido-NAD(+) (L-Gln route): step 1/1.</text>
</comment>
<comment type="similarity">
    <text evidence="1 3">In the C-terminal section; belongs to the NAD synthetase family.</text>
</comment>
<evidence type="ECO:0000255" key="1">
    <source>
        <dbReference type="HAMAP-Rule" id="MF_02090"/>
    </source>
</evidence>
<evidence type="ECO:0000255" key="2">
    <source>
        <dbReference type="PROSITE-ProRule" id="PRU00054"/>
    </source>
</evidence>
<evidence type="ECO:0000305" key="3"/>
<reference key="1">
    <citation type="journal article" date="2003" name="J. Bacteriol.">
        <title>Comparative analyses of the complete genome sequences of Pierce's disease and citrus variegated chlorosis strains of Xylella fastidiosa.</title>
        <authorList>
            <person name="Van Sluys M.A."/>
            <person name="de Oliveira M.C."/>
            <person name="Monteiro-Vitorello C.B."/>
            <person name="Miyaki C.Y."/>
            <person name="Furlan L.R."/>
            <person name="Camargo L.E.A."/>
            <person name="da Silva A.C.R."/>
            <person name="Moon D.H."/>
            <person name="Takita M.A."/>
            <person name="Lemos E.G.M."/>
            <person name="Machado M.A."/>
            <person name="Ferro M.I.T."/>
            <person name="da Silva F.R."/>
            <person name="Goldman M.H.S."/>
            <person name="Goldman G.H."/>
            <person name="Lemos M.V.F."/>
            <person name="El-Dorry H."/>
            <person name="Tsai S.M."/>
            <person name="Carrer H."/>
            <person name="Carraro D.M."/>
            <person name="de Oliveira R.C."/>
            <person name="Nunes L.R."/>
            <person name="Siqueira W.J."/>
            <person name="Coutinho L.L."/>
            <person name="Kimura E.T."/>
            <person name="Ferro E.S."/>
            <person name="Harakava R."/>
            <person name="Kuramae E.E."/>
            <person name="Marino C.L."/>
            <person name="Giglioti E."/>
            <person name="Abreu I.L."/>
            <person name="Alves L.M.C."/>
            <person name="do Amaral A.M."/>
            <person name="Baia G.S."/>
            <person name="Blanco S.R."/>
            <person name="Brito M.S."/>
            <person name="Cannavan F.S."/>
            <person name="Celestino A.V."/>
            <person name="da Cunha A.F."/>
            <person name="Fenille R.C."/>
            <person name="Ferro J.A."/>
            <person name="Formighieri E.F."/>
            <person name="Kishi L.T."/>
            <person name="Leoni S.G."/>
            <person name="Oliveira A.R."/>
            <person name="Rosa V.E. Jr."/>
            <person name="Sassaki F.T."/>
            <person name="Sena J.A.D."/>
            <person name="de Souza A.A."/>
            <person name="Truffi D."/>
            <person name="Tsukumo F."/>
            <person name="Yanai G.M."/>
            <person name="Zaros L.G."/>
            <person name="Civerolo E.L."/>
            <person name="Simpson A.J.G."/>
            <person name="Almeida N.F. Jr."/>
            <person name="Setubal J.C."/>
            <person name="Kitajima J.P."/>
        </authorList>
    </citation>
    <scope>NUCLEOTIDE SEQUENCE [LARGE SCALE GENOMIC DNA]</scope>
    <source>
        <strain>Temecula1 / ATCC 700964</strain>
    </source>
</reference>
<proteinExistence type="inferred from homology"/>
<organism>
    <name type="scientific">Xylella fastidiosa (strain Temecula1 / ATCC 700964)</name>
    <dbReference type="NCBI Taxonomy" id="183190"/>
    <lineage>
        <taxon>Bacteria</taxon>
        <taxon>Pseudomonadati</taxon>
        <taxon>Pseudomonadota</taxon>
        <taxon>Gammaproteobacteria</taxon>
        <taxon>Lysobacterales</taxon>
        <taxon>Lysobacteraceae</taxon>
        <taxon>Xylella</taxon>
    </lineage>
</organism>